<feature type="chain" id="PRO_0000180930" description="Flagellar motor switch protein FliM">
    <location>
        <begin position="1"/>
        <end position="315"/>
    </location>
</feature>
<feature type="sequence conflict" description="In Ref. 1; CAA11954." evidence="2" ref="1">
    <original>E</original>
    <variation>D</variation>
    <location>
        <position position="71"/>
    </location>
</feature>
<feature type="sequence conflict" description="In Ref. 1; CAA11954." evidence="2" ref="1">
    <original>L</original>
    <variation>F</variation>
    <location>
        <position position="85"/>
    </location>
</feature>
<feature type="sequence conflict" description="In Ref. 4; AAB48838." evidence="2" ref="4">
    <original>S</original>
    <variation>T</variation>
    <location>
        <position position="100"/>
    </location>
</feature>
<feature type="sequence conflict" description="In Ref. 4; AAB48838." evidence="2" ref="4">
    <original>AE</original>
    <variation>PN</variation>
    <location>
        <begin position="113"/>
        <end position="114"/>
    </location>
</feature>
<feature type="sequence conflict" description="In Ref. 4; AAB48838." evidence="2" ref="4">
    <original>A</original>
    <variation>P</variation>
    <location>
        <position position="122"/>
    </location>
</feature>
<feature type="sequence conflict" description="In Ref. 4; AAB48838." evidence="2" ref="4">
    <original>HG</original>
    <variation>SR</variation>
    <location>
        <begin position="139"/>
        <end position="140"/>
    </location>
</feature>
<feature type="sequence conflict" description="In Ref. 1; CAA11954." evidence="2" ref="1">
    <original>Q</original>
    <variation>E</variation>
    <location>
        <position position="176"/>
    </location>
</feature>
<feature type="sequence conflict" description="In Ref. 1; CAA11954." evidence="2" ref="1">
    <original>V</original>
    <variation>I</variation>
    <location>
        <position position="210"/>
    </location>
</feature>
<feature type="sequence conflict" description="In Ref. 4; AAB48838." evidence="2" ref="4">
    <original>L</original>
    <variation>C</variation>
    <location>
        <position position="258"/>
    </location>
</feature>
<gene>
    <name type="primary">fliM</name>
    <name type="ordered locus">R00653</name>
    <name type="ORF">SMc03021</name>
</gene>
<keyword id="KW-0975">Bacterial flagellum</keyword>
<keyword id="KW-0997">Cell inner membrane</keyword>
<keyword id="KW-1003">Cell membrane</keyword>
<keyword id="KW-0145">Chemotaxis</keyword>
<keyword id="KW-0283">Flagellar rotation</keyword>
<keyword id="KW-0472">Membrane</keyword>
<keyword id="KW-1185">Reference proteome</keyword>
<protein>
    <recommendedName>
        <fullName>Flagellar motor switch protein FliM</fullName>
    </recommendedName>
</protein>
<reference key="1">
    <citation type="journal article" date="1998" name="Gene">
        <title>Mapping of 41 chemotaxis, flagellar and motility genes to a single region of the Sinorhizobium meliloti chromosome.</title>
        <authorList>
            <person name="Sourjik V."/>
            <person name="Sterr W."/>
            <person name="Platzer J."/>
            <person name="Bos I."/>
            <person name="Haslbeck M."/>
            <person name="Schmitt R."/>
        </authorList>
    </citation>
    <scope>NUCLEOTIDE SEQUENCE [GENOMIC DNA]</scope>
    <source>
        <strain>RU11/001</strain>
    </source>
</reference>
<reference key="2">
    <citation type="journal article" date="2001" name="Proc. Natl. Acad. Sci. U.S.A.">
        <title>Analysis of the chromosome sequence of the legume symbiont Sinorhizobium meliloti strain 1021.</title>
        <authorList>
            <person name="Capela D."/>
            <person name="Barloy-Hubler F."/>
            <person name="Gouzy J."/>
            <person name="Bothe G."/>
            <person name="Ampe F."/>
            <person name="Batut J."/>
            <person name="Boistard P."/>
            <person name="Becker A."/>
            <person name="Boutry M."/>
            <person name="Cadieu E."/>
            <person name="Dreano S."/>
            <person name="Gloux S."/>
            <person name="Godrie T."/>
            <person name="Goffeau A."/>
            <person name="Kahn D."/>
            <person name="Kiss E."/>
            <person name="Lelaure V."/>
            <person name="Masuy D."/>
            <person name="Pohl T."/>
            <person name="Portetelle D."/>
            <person name="Puehler A."/>
            <person name="Purnelle B."/>
            <person name="Ramsperger U."/>
            <person name="Renard C."/>
            <person name="Thebault P."/>
            <person name="Vandenbol M."/>
            <person name="Weidner S."/>
            <person name="Galibert F."/>
        </authorList>
    </citation>
    <scope>NUCLEOTIDE SEQUENCE [LARGE SCALE GENOMIC DNA]</scope>
    <source>
        <strain>1021</strain>
    </source>
</reference>
<reference key="3">
    <citation type="journal article" date="2001" name="Science">
        <title>The composite genome of the legume symbiont Sinorhizobium meliloti.</title>
        <authorList>
            <person name="Galibert F."/>
            <person name="Finan T.M."/>
            <person name="Long S.R."/>
            <person name="Puehler A."/>
            <person name="Abola P."/>
            <person name="Ampe F."/>
            <person name="Barloy-Hubler F."/>
            <person name="Barnett M.J."/>
            <person name="Becker A."/>
            <person name="Boistard P."/>
            <person name="Bothe G."/>
            <person name="Boutry M."/>
            <person name="Bowser L."/>
            <person name="Buhrmester J."/>
            <person name="Cadieu E."/>
            <person name="Capela D."/>
            <person name="Chain P."/>
            <person name="Cowie A."/>
            <person name="Davis R.W."/>
            <person name="Dreano S."/>
            <person name="Federspiel N.A."/>
            <person name="Fisher R.F."/>
            <person name="Gloux S."/>
            <person name="Godrie T."/>
            <person name="Goffeau A."/>
            <person name="Golding B."/>
            <person name="Gouzy J."/>
            <person name="Gurjal M."/>
            <person name="Hernandez-Lucas I."/>
            <person name="Hong A."/>
            <person name="Huizar L."/>
            <person name="Hyman R.W."/>
            <person name="Jones T."/>
            <person name="Kahn D."/>
            <person name="Kahn M.L."/>
            <person name="Kalman S."/>
            <person name="Keating D.H."/>
            <person name="Kiss E."/>
            <person name="Komp C."/>
            <person name="Lelaure V."/>
            <person name="Masuy D."/>
            <person name="Palm C."/>
            <person name="Peck M.C."/>
            <person name="Pohl T.M."/>
            <person name="Portetelle D."/>
            <person name="Purnelle B."/>
            <person name="Ramsperger U."/>
            <person name="Surzycki R."/>
            <person name="Thebault P."/>
            <person name="Vandenbol M."/>
            <person name="Vorhoelter F.J."/>
            <person name="Weidner S."/>
            <person name="Wells D.H."/>
            <person name="Wong K."/>
            <person name="Yeh K.-C."/>
            <person name="Batut J."/>
        </authorList>
    </citation>
    <scope>NUCLEOTIDE SEQUENCE [LARGE SCALE GENOMIC DNA]</scope>
    <source>
        <strain>1021</strain>
    </source>
</reference>
<reference key="4">
    <citation type="submission" date="1997-01" db="EMBL/GenBank/DDBJ databases">
        <authorList>
            <person name="Hazelbauer G.L."/>
            <person name="Daley I.J."/>
            <person name="Dutton D.P."/>
            <person name="Lilly A.A."/>
        </authorList>
    </citation>
    <scope>NUCLEOTIDE SEQUENCE [GENOMIC DNA] OF 1-258</scope>
    <source>
        <strain>RCR2011 / SU47</strain>
    </source>
</reference>
<accession>O54246</accession>
<accession>P96998</accession>
<dbReference type="EMBL" id="AJ224445">
    <property type="protein sequence ID" value="CAA11954.1"/>
    <property type="molecule type" value="Genomic_DNA"/>
</dbReference>
<dbReference type="EMBL" id="AL591688">
    <property type="protein sequence ID" value="CAC45225.1"/>
    <property type="molecule type" value="Genomic_DNA"/>
</dbReference>
<dbReference type="EMBL" id="U87146">
    <property type="protein sequence ID" value="AAB48838.1"/>
    <property type="molecule type" value="Genomic_DNA"/>
</dbReference>
<dbReference type="RefSeq" id="NP_384759.1">
    <property type="nucleotide sequence ID" value="NC_003047.1"/>
</dbReference>
<dbReference type="RefSeq" id="WP_010968727.1">
    <property type="nucleotide sequence ID" value="NC_003047.1"/>
</dbReference>
<dbReference type="SMR" id="O54246"/>
<dbReference type="EnsemblBacteria" id="CAC45225">
    <property type="protein sequence ID" value="CAC45225"/>
    <property type="gene ID" value="SMc03021"/>
</dbReference>
<dbReference type="KEGG" id="sme:SMc03021"/>
<dbReference type="PATRIC" id="fig|266834.11.peg.2027"/>
<dbReference type="eggNOG" id="COG1868">
    <property type="taxonomic scope" value="Bacteria"/>
</dbReference>
<dbReference type="HOGENOM" id="CLU_879623_0_0_5"/>
<dbReference type="OrthoDB" id="8273530at2"/>
<dbReference type="Proteomes" id="UP000001976">
    <property type="component" value="Chromosome"/>
</dbReference>
<dbReference type="GO" id="GO:0009425">
    <property type="term" value="C:bacterial-type flagellum basal body"/>
    <property type="evidence" value="ECO:0007669"/>
    <property type="project" value="UniProtKB-SubCell"/>
</dbReference>
<dbReference type="GO" id="GO:0005886">
    <property type="term" value="C:plasma membrane"/>
    <property type="evidence" value="ECO:0007669"/>
    <property type="project" value="UniProtKB-SubCell"/>
</dbReference>
<dbReference type="GO" id="GO:0071978">
    <property type="term" value="P:bacterial-type flagellum-dependent swarming motility"/>
    <property type="evidence" value="ECO:0007669"/>
    <property type="project" value="TreeGrafter"/>
</dbReference>
<dbReference type="GO" id="GO:0050918">
    <property type="term" value="P:positive chemotaxis"/>
    <property type="evidence" value="ECO:0007669"/>
    <property type="project" value="TreeGrafter"/>
</dbReference>
<dbReference type="Gene3D" id="3.40.1550.10">
    <property type="entry name" value="CheC-like"/>
    <property type="match status" value="1"/>
</dbReference>
<dbReference type="Gene3D" id="2.30.330.10">
    <property type="entry name" value="SpoA-like"/>
    <property type="match status" value="1"/>
</dbReference>
<dbReference type="InterPro" id="IPR028976">
    <property type="entry name" value="CheC-like_sf"/>
</dbReference>
<dbReference type="InterPro" id="IPR001543">
    <property type="entry name" value="FliN-like_C"/>
</dbReference>
<dbReference type="InterPro" id="IPR036429">
    <property type="entry name" value="SpoA-like_sf"/>
</dbReference>
<dbReference type="PANTHER" id="PTHR30034">
    <property type="entry name" value="FLAGELLAR MOTOR SWITCH PROTEIN FLIM"/>
    <property type="match status" value="1"/>
</dbReference>
<dbReference type="PANTHER" id="PTHR30034:SF6">
    <property type="entry name" value="YOP PROTEINS TRANSLOCATION PROTEIN Q"/>
    <property type="match status" value="1"/>
</dbReference>
<dbReference type="Pfam" id="PF01052">
    <property type="entry name" value="FliMN_C"/>
    <property type="match status" value="1"/>
</dbReference>
<dbReference type="SUPFAM" id="SSF101801">
    <property type="entry name" value="Surface presentation of antigens (SPOA)"/>
    <property type="match status" value="1"/>
</dbReference>
<sequence>MSTSTASNVHAFDRRLIARMTGALGDDKVIGRTALELAQVFDELLPGVLQSETGCDVTIAYAGFRTGLRNELIAALGDGVLLGDLSLRNWCADFQVGCDSPVLIALVEALLGAEPTSIEEPAPRSLSKIEIDVALPVFHGIAEVLRTAVNAPGGFEPVVGRPYNSAERAKPDPVLQDVFAASIDMTIGLGPVLSTFSVIVPQSTLLKTRVVSRKGAGEDRNAKTEWTEQLEEQVRRSAVALEARIRLESLTLDTLSRLQAGDVIPFHDGQDVRVEVSANGRDLYVCEFGRSGSRYTVRVKDTHGSEQDILRHIMS</sequence>
<evidence type="ECO:0000250" key="1"/>
<evidence type="ECO:0000305" key="2"/>
<organism>
    <name type="scientific">Rhizobium meliloti (strain 1021)</name>
    <name type="common">Ensifer meliloti</name>
    <name type="synonym">Sinorhizobium meliloti</name>
    <dbReference type="NCBI Taxonomy" id="266834"/>
    <lineage>
        <taxon>Bacteria</taxon>
        <taxon>Pseudomonadati</taxon>
        <taxon>Pseudomonadota</taxon>
        <taxon>Alphaproteobacteria</taxon>
        <taxon>Hyphomicrobiales</taxon>
        <taxon>Rhizobiaceae</taxon>
        <taxon>Sinorhizobium/Ensifer group</taxon>
        <taxon>Sinorhizobium</taxon>
    </lineage>
</organism>
<name>FLIM_RHIME</name>
<proteinExistence type="inferred from homology"/>
<comment type="function">
    <text evidence="1">FliM is one of three proteins (FliG, FliN, FliM) that forms the rotor-mounted switch complex (C ring), located at the base of the basal body. This complex interacts with the CheY and CheZ chemotaxis proteins, in addition to contacting components of the motor that determine the direction of flagellar rotation (By similarity).</text>
</comment>
<comment type="subcellular location">
    <subcellularLocation>
        <location evidence="1">Cell inner membrane</location>
        <topology evidence="1">Peripheral membrane protein</topology>
    </subcellularLocation>
    <subcellularLocation>
        <location evidence="1">Bacterial flagellum basal body</location>
    </subcellularLocation>
</comment>
<comment type="similarity">
    <text evidence="2">Belongs to the FliM family.</text>
</comment>